<name>ISPF_BIFLS</name>
<protein>
    <recommendedName>
        <fullName evidence="1">2-C-methyl-D-erythritol 2,4-cyclodiphosphate synthase</fullName>
        <shortName evidence="1">MECDP-synthase</shortName>
        <shortName evidence="1">MECPP-synthase</shortName>
        <shortName evidence="1">MECPS</shortName>
        <ecNumber evidence="1">4.6.1.12</ecNumber>
    </recommendedName>
</protein>
<organism>
    <name type="scientific">Bifidobacterium longum subsp. infantis (strain ATCC 15697 / DSM 20088 / JCM 1222 / NCTC 11817 / S12)</name>
    <dbReference type="NCBI Taxonomy" id="391904"/>
    <lineage>
        <taxon>Bacteria</taxon>
        <taxon>Bacillati</taxon>
        <taxon>Actinomycetota</taxon>
        <taxon>Actinomycetes</taxon>
        <taxon>Bifidobacteriales</taxon>
        <taxon>Bifidobacteriaceae</taxon>
        <taxon>Bifidobacterium</taxon>
    </lineage>
</organism>
<evidence type="ECO:0000255" key="1">
    <source>
        <dbReference type="HAMAP-Rule" id="MF_00107"/>
    </source>
</evidence>
<feature type="chain" id="PRO_1000118995" description="2-C-methyl-D-erythritol 2,4-cyclodiphosphate synthase">
    <location>
        <begin position="1"/>
        <end position="174"/>
    </location>
</feature>
<feature type="binding site" evidence="1">
    <location>
        <begin position="13"/>
        <end position="15"/>
    </location>
    <ligand>
        <name>4-CDP-2-C-methyl-D-erythritol 2-phosphate</name>
        <dbReference type="ChEBI" id="CHEBI:57919"/>
    </ligand>
</feature>
<feature type="binding site" evidence="1">
    <location>
        <position position="13"/>
    </location>
    <ligand>
        <name>a divalent metal cation</name>
        <dbReference type="ChEBI" id="CHEBI:60240"/>
    </ligand>
</feature>
<feature type="binding site" evidence="1">
    <location>
        <position position="15"/>
    </location>
    <ligand>
        <name>a divalent metal cation</name>
        <dbReference type="ChEBI" id="CHEBI:60240"/>
    </ligand>
</feature>
<feature type="binding site" evidence="1">
    <location>
        <position position="61"/>
    </location>
    <ligand>
        <name>a divalent metal cation</name>
        <dbReference type="ChEBI" id="CHEBI:60240"/>
    </ligand>
</feature>
<feature type="binding site" evidence="1">
    <location>
        <begin position="75"/>
        <end position="77"/>
    </location>
    <ligand>
        <name>4-CDP-2-C-methyl-D-erythritol 2-phosphate</name>
        <dbReference type="ChEBI" id="CHEBI:57919"/>
    </ligand>
</feature>
<feature type="binding site" evidence="1">
    <location>
        <begin position="149"/>
        <end position="152"/>
    </location>
    <ligand>
        <name>4-CDP-2-C-methyl-D-erythritol 2-phosphate</name>
        <dbReference type="ChEBI" id="CHEBI:57919"/>
    </ligand>
</feature>
<feature type="binding site" evidence="1">
    <location>
        <position position="156"/>
    </location>
    <ligand>
        <name>4-CDP-2-C-methyl-D-erythritol 2-phosphate</name>
        <dbReference type="ChEBI" id="CHEBI:57919"/>
    </ligand>
</feature>
<feature type="binding site" evidence="1">
    <location>
        <position position="159"/>
    </location>
    <ligand>
        <name>4-CDP-2-C-methyl-D-erythritol 2-phosphate</name>
        <dbReference type="ChEBI" id="CHEBI:57919"/>
    </ligand>
</feature>
<feature type="site" description="Transition state stabilizer" evidence="1">
    <location>
        <position position="53"/>
    </location>
</feature>
<feature type="site" description="Transition state stabilizer" evidence="1">
    <location>
        <position position="150"/>
    </location>
</feature>
<comment type="function">
    <text evidence="1">Involved in the biosynthesis of isopentenyl diphosphate (IPP) and dimethylallyl diphosphate (DMAPP), two major building blocks of isoprenoid compounds. Catalyzes the conversion of 4-diphosphocytidyl-2-C-methyl-D-erythritol 2-phosphate (CDP-ME2P) to 2-C-methyl-D-erythritol 2,4-cyclodiphosphate (ME-CPP) with a corresponding release of cytidine 5-monophosphate (CMP).</text>
</comment>
<comment type="catalytic activity">
    <reaction evidence="1">
        <text>4-CDP-2-C-methyl-D-erythritol 2-phosphate = 2-C-methyl-D-erythritol 2,4-cyclic diphosphate + CMP</text>
        <dbReference type="Rhea" id="RHEA:23864"/>
        <dbReference type="ChEBI" id="CHEBI:57919"/>
        <dbReference type="ChEBI" id="CHEBI:58483"/>
        <dbReference type="ChEBI" id="CHEBI:60377"/>
        <dbReference type="EC" id="4.6.1.12"/>
    </reaction>
</comment>
<comment type="cofactor">
    <cofactor evidence="1">
        <name>a divalent metal cation</name>
        <dbReference type="ChEBI" id="CHEBI:60240"/>
    </cofactor>
    <text evidence="1">Binds 1 divalent metal cation per subunit.</text>
</comment>
<comment type="pathway">
    <text evidence="1">Isoprenoid biosynthesis; isopentenyl diphosphate biosynthesis via DXP pathway; isopentenyl diphosphate from 1-deoxy-D-xylulose 5-phosphate: step 4/6.</text>
</comment>
<comment type="subunit">
    <text evidence="1">Homotrimer.</text>
</comment>
<comment type="similarity">
    <text evidence="1">Belongs to the IspF family.</text>
</comment>
<gene>
    <name evidence="1" type="primary">ispF</name>
    <name type="ordered locus">Blon_1759</name>
    <name type="ordered locus">BLIJ_1818</name>
</gene>
<reference key="1">
    <citation type="journal article" date="2008" name="Proc. Natl. Acad. Sci. U.S.A.">
        <title>The genome sequence of Bifidobacterium longum subsp. infantis reveals adaptations for milk utilization within the infant microbiome.</title>
        <authorList>
            <person name="Sela D.A."/>
            <person name="Chapman J."/>
            <person name="Adeuya A."/>
            <person name="Kim J.H."/>
            <person name="Chen F."/>
            <person name="Whitehead T.R."/>
            <person name="Lapidus A."/>
            <person name="Rokhsar D.S."/>
            <person name="Lebrilla C.B."/>
            <person name="German J.B."/>
            <person name="Price N.P."/>
            <person name="Richardson P.M."/>
            <person name="Mills D.A."/>
        </authorList>
    </citation>
    <scope>NUCLEOTIDE SEQUENCE [LARGE SCALE GENOMIC DNA]</scope>
    <source>
        <strain>ATCC 15697 / DSM 20088 / JCM 1222 / NCTC 11817 / S12</strain>
    </source>
</reference>
<reference key="2">
    <citation type="journal article" date="2011" name="Nature">
        <title>Bifidobacteria can protect from enteropathogenic infection through production of acetate.</title>
        <authorList>
            <person name="Fukuda S."/>
            <person name="Toh H."/>
            <person name="Hase K."/>
            <person name="Oshima K."/>
            <person name="Nakanishi Y."/>
            <person name="Yoshimura K."/>
            <person name="Tobe T."/>
            <person name="Clarke J.M."/>
            <person name="Topping D.L."/>
            <person name="Suzuki T."/>
            <person name="Taylor T.D."/>
            <person name="Itoh K."/>
            <person name="Kikuchi J."/>
            <person name="Morita H."/>
            <person name="Hattori M."/>
            <person name="Ohno H."/>
        </authorList>
    </citation>
    <scope>NUCLEOTIDE SEQUENCE [LARGE SCALE GENOMIC DNA]</scope>
    <source>
        <strain>ATCC 15697 / DSM 20088 / JCM 1222 / NCTC 11817 / S12</strain>
    </source>
</reference>
<proteinExistence type="inferred from homology"/>
<accession>B7GT04</accession>
<accession>E8MLH1</accession>
<dbReference type="EC" id="4.6.1.12" evidence="1"/>
<dbReference type="EMBL" id="CP001095">
    <property type="protein sequence ID" value="ACJ52834.1"/>
    <property type="molecule type" value="Genomic_DNA"/>
</dbReference>
<dbReference type="EMBL" id="AP010889">
    <property type="protein sequence ID" value="BAJ69398.1"/>
    <property type="molecule type" value="Genomic_DNA"/>
</dbReference>
<dbReference type="RefSeq" id="WP_012578058.1">
    <property type="nucleotide sequence ID" value="NC_011593.1"/>
</dbReference>
<dbReference type="SMR" id="B7GT04"/>
<dbReference type="KEGG" id="bln:Blon_1759"/>
<dbReference type="KEGG" id="blon:BLIJ_1818"/>
<dbReference type="PATRIC" id="fig|391904.8.peg.1824"/>
<dbReference type="HOGENOM" id="CLU_084630_1_0_11"/>
<dbReference type="UniPathway" id="UPA00056">
    <property type="reaction ID" value="UER00095"/>
</dbReference>
<dbReference type="Proteomes" id="UP000001360">
    <property type="component" value="Chromosome"/>
</dbReference>
<dbReference type="GO" id="GO:0008685">
    <property type="term" value="F:2-C-methyl-D-erythritol 2,4-cyclodiphosphate synthase activity"/>
    <property type="evidence" value="ECO:0007669"/>
    <property type="project" value="UniProtKB-UniRule"/>
</dbReference>
<dbReference type="GO" id="GO:0046872">
    <property type="term" value="F:metal ion binding"/>
    <property type="evidence" value="ECO:0007669"/>
    <property type="project" value="UniProtKB-KW"/>
</dbReference>
<dbReference type="GO" id="GO:0019288">
    <property type="term" value="P:isopentenyl diphosphate biosynthetic process, methylerythritol 4-phosphate pathway"/>
    <property type="evidence" value="ECO:0007669"/>
    <property type="project" value="UniProtKB-UniRule"/>
</dbReference>
<dbReference type="GO" id="GO:0016114">
    <property type="term" value="P:terpenoid biosynthetic process"/>
    <property type="evidence" value="ECO:0007669"/>
    <property type="project" value="InterPro"/>
</dbReference>
<dbReference type="CDD" id="cd00554">
    <property type="entry name" value="MECDP_synthase"/>
    <property type="match status" value="1"/>
</dbReference>
<dbReference type="Gene3D" id="3.30.1330.50">
    <property type="entry name" value="2-C-methyl-D-erythritol 2,4-cyclodiphosphate synthase"/>
    <property type="match status" value="1"/>
</dbReference>
<dbReference type="HAMAP" id="MF_00107">
    <property type="entry name" value="IspF"/>
    <property type="match status" value="1"/>
</dbReference>
<dbReference type="InterPro" id="IPR003526">
    <property type="entry name" value="MECDP_synthase"/>
</dbReference>
<dbReference type="InterPro" id="IPR020555">
    <property type="entry name" value="MECDP_synthase_CS"/>
</dbReference>
<dbReference type="InterPro" id="IPR036571">
    <property type="entry name" value="MECDP_synthase_sf"/>
</dbReference>
<dbReference type="PANTHER" id="PTHR43181">
    <property type="entry name" value="2-C-METHYL-D-ERYTHRITOL 2,4-CYCLODIPHOSPHATE SYNTHASE, CHLOROPLASTIC"/>
    <property type="match status" value="1"/>
</dbReference>
<dbReference type="PANTHER" id="PTHR43181:SF1">
    <property type="entry name" value="2-C-METHYL-D-ERYTHRITOL 2,4-CYCLODIPHOSPHATE SYNTHASE, CHLOROPLASTIC"/>
    <property type="match status" value="1"/>
</dbReference>
<dbReference type="Pfam" id="PF02542">
    <property type="entry name" value="YgbB"/>
    <property type="match status" value="1"/>
</dbReference>
<dbReference type="SUPFAM" id="SSF69765">
    <property type="entry name" value="IpsF-like"/>
    <property type="match status" value="1"/>
</dbReference>
<dbReference type="PROSITE" id="PS01350">
    <property type="entry name" value="ISPF"/>
    <property type="match status" value="1"/>
</dbReference>
<sequence length="174" mass="17462">MGAAGVLIGQGFDAHRFAPAGSGRELWIAGLYWPVPDSCSEADAARYEGIEGDSDGDVAAHALIDALLAAARLGDIGSLFGVGADAHGAGRHGIDMLQEVVAHLASNGYTPASASVAIIGNRPKIGTRRAEAEAALSAAVGCPVSVTATTTDHMGFTGRGEGIAAIANALVEKI</sequence>
<keyword id="KW-0414">Isoprene biosynthesis</keyword>
<keyword id="KW-0456">Lyase</keyword>
<keyword id="KW-0479">Metal-binding</keyword>